<name>GCH1_YERE8</name>
<gene>
    <name evidence="2" type="primary">folE</name>
    <name type="ordered locus">YE2818</name>
</gene>
<proteinExistence type="inferred from homology"/>
<dbReference type="EC" id="3.5.4.16" evidence="2"/>
<dbReference type="EMBL" id="AM286415">
    <property type="protein sequence ID" value="CAL12851.1"/>
    <property type="molecule type" value="Genomic_DNA"/>
</dbReference>
<dbReference type="RefSeq" id="WP_004709152.1">
    <property type="nucleotide sequence ID" value="NC_008800.1"/>
</dbReference>
<dbReference type="RefSeq" id="YP_001007007.1">
    <property type="nucleotide sequence ID" value="NC_008800.1"/>
</dbReference>
<dbReference type="SMR" id="A1JU09"/>
<dbReference type="GeneID" id="97456948"/>
<dbReference type="KEGG" id="yen:YE2818"/>
<dbReference type="PATRIC" id="fig|393305.7.peg.2993"/>
<dbReference type="eggNOG" id="COG0302">
    <property type="taxonomic scope" value="Bacteria"/>
</dbReference>
<dbReference type="HOGENOM" id="CLU_049768_3_2_6"/>
<dbReference type="OrthoDB" id="9801207at2"/>
<dbReference type="UniPathway" id="UPA00848">
    <property type="reaction ID" value="UER00151"/>
</dbReference>
<dbReference type="Proteomes" id="UP000000642">
    <property type="component" value="Chromosome"/>
</dbReference>
<dbReference type="GO" id="GO:0005737">
    <property type="term" value="C:cytoplasm"/>
    <property type="evidence" value="ECO:0007669"/>
    <property type="project" value="TreeGrafter"/>
</dbReference>
<dbReference type="GO" id="GO:0005525">
    <property type="term" value="F:GTP binding"/>
    <property type="evidence" value="ECO:0007669"/>
    <property type="project" value="UniProtKB-KW"/>
</dbReference>
<dbReference type="GO" id="GO:0003934">
    <property type="term" value="F:GTP cyclohydrolase I activity"/>
    <property type="evidence" value="ECO:0007669"/>
    <property type="project" value="UniProtKB-UniRule"/>
</dbReference>
<dbReference type="GO" id="GO:0008270">
    <property type="term" value="F:zinc ion binding"/>
    <property type="evidence" value="ECO:0007669"/>
    <property type="project" value="UniProtKB-UniRule"/>
</dbReference>
<dbReference type="GO" id="GO:0006730">
    <property type="term" value="P:one-carbon metabolic process"/>
    <property type="evidence" value="ECO:0007669"/>
    <property type="project" value="UniProtKB-UniRule"/>
</dbReference>
<dbReference type="GO" id="GO:0006729">
    <property type="term" value="P:tetrahydrobiopterin biosynthetic process"/>
    <property type="evidence" value="ECO:0007669"/>
    <property type="project" value="TreeGrafter"/>
</dbReference>
<dbReference type="GO" id="GO:0046654">
    <property type="term" value="P:tetrahydrofolate biosynthetic process"/>
    <property type="evidence" value="ECO:0007669"/>
    <property type="project" value="UniProtKB-UniRule"/>
</dbReference>
<dbReference type="FunFam" id="1.10.286.10:FF:000002">
    <property type="entry name" value="GTP cyclohydrolase 1"/>
    <property type="match status" value="1"/>
</dbReference>
<dbReference type="FunFam" id="3.30.1130.10:FF:000001">
    <property type="entry name" value="GTP cyclohydrolase 1"/>
    <property type="match status" value="1"/>
</dbReference>
<dbReference type="Gene3D" id="1.10.286.10">
    <property type="match status" value="1"/>
</dbReference>
<dbReference type="Gene3D" id="3.30.1130.10">
    <property type="match status" value="1"/>
</dbReference>
<dbReference type="HAMAP" id="MF_00223">
    <property type="entry name" value="FolE"/>
    <property type="match status" value="1"/>
</dbReference>
<dbReference type="InterPro" id="IPR043133">
    <property type="entry name" value="GTP-CH-I_C/QueF"/>
</dbReference>
<dbReference type="InterPro" id="IPR043134">
    <property type="entry name" value="GTP-CH-I_N"/>
</dbReference>
<dbReference type="InterPro" id="IPR001474">
    <property type="entry name" value="GTP_CycHdrlase_I"/>
</dbReference>
<dbReference type="InterPro" id="IPR018234">
    <property type="entry name" value="GTP_CycHdrlase_I_CS"/>
</dbReference>
<dbReference type="InterPro" id="IPR020602">
    <property type="entry name" value="GTP_CycHdrlase_I_dom"/>
</dbReference>
<dbReference type="NCBIfam" id="TIGR00063">
    <property type="entry name" value="folE"/>
    <property type="match status" value="1"/>
</dbReference>
<dbReference type="NCBIfam" id="NF006824">
    <property type="entry name" value="PRK09347.1-1"/>
    <property type="match status" value="1"/>
</dbReference>
<dbReference type="NCBIfam" id="NF006825">
    <property type="entry name" value="PRK09347.1-2"/>
    <property type="match status" value="1"/>
</dbReference>
<dbReference type="NCBIfam" id="NF006826">
    <property type="entry name" value="PRK09347.1-3"/>
    <property type="match status" value="1"/>
</dbReference>
<dbReference type="PANTHER" id="PTHR11109:SF7">
    <property type="entry name" value="GTP CYCLOHYDROLASE 1"/>
    <property type="match status" value="1"/>
</dbReference>
<dbReference type="PANTHER" id="PTHR11109">
    <property type="entry name" value="GTP CYCLOHYDROLASE I"/>
    <property type="match status" value="1"/>
</dbReference>
<dbReference type="Pfam" id="PF01227">
    <property type="entry name" value="GTP_cyclohydroI"/>
    <property type="match status" value="1"/>
</dbReference>
<dbReference type="SUPFAM" id="SSF55620">
    <property type="entry name" value="Tetrahydrobiopterin biosynthesis enzymes-like"/>
    <property type="match status" value="1"/>
</dbReference>
<dbReference type="PROSITE" id="PS00859">
    <property type="entry name" value="GTP_CYCLOHYDROL_1_1"/>
    <property type="match status" value="1"/>
</dbReference>
<dbReference type="PROSITE" id="PS00860">
    <property type="entry name" value="GTP_CYCLOHYDROL_1_2"/>
    <property type="match status" value="1"/>
</dbReference>
<accession>A1JU09</accession>
<feature type="chain" id="PRO_1000043759" description="GTP cyclohydrolase 1">
    <location>
        <begin position="1"/>
        <end position="220"/>
    </location>
</feature>
<feature type="binding site" evidence="2">
    <location>
        <position position="109"/>
    </location>
    <ligand>
        <name>Zn(2+)</name>
        <dbReference type="ChEBI" id="CHEBI:29105"/>
    </ligand>
</feature>
<feature type="binding site" evidence="2">
    <location>
        <position position="112"/>
    </location>
    <ligand>
        <name>Zn(2+)</name>
        <dbReference type="ChEBI" id="CHEBI:29105"/>
    </ligand>
</feature>
<feature type="binding site" evidence="2">
    <location>
        <position position="180"/>
    </location>
    <ligand>
        <name>Zn(2+)</name>
        <dbReference type="ChEBI" id="CHEBI:29105"/>
    </ligand>
</feature>
<evidence type="ECO:0000250" key="1"/>
<evidence type="ECO:0000255" key="2">
    <source>
        <dbReference type="HAMAP-Rule" id="MF_00223"/>
    </source>
</evidence>
<sequence>MSSLSKEAELVHEALLARGLETPLRKQELDAETRKTRIQEHMTQVMQLLNLDLSDDSLADTPRRIAKMYVDEIFSGLDYENFPKITLIENKMKVDEMVTVRDITLTSTCEHHFVTIDGKATVAYIPKDSVIGLSKINRIVQFFAQRPQVQERLTQQILLALQTLLGTNNVAVSIDAVHYCVKARGIRDATSATTTTSLGGLFKSSQNTRQEFLRAVRHNG</sequence>
<comment type="catalytic activity">
    <reaction evidence="2">
        <text>GTP + H2O = 7,8-dihydroneopterin 3'-triphosphate + formate + H(+)</text>
        <dbReference type="Rhea" id="RHEA:17473"/>
        <dbReference type="ChEBI" id="CHEBI:15377"/>
        <dbReference type="ChEBI" id="CHEBI:15378"/>
        <dbReference type="ChEBI" id="CHEBI:15740"/>
        <dbReference type="ChEBI" id="CHEBI:37565"/>
        <dbReference type="ChEBI" id="CHEBI:58462"/>
        <dbReference type="EC" id="3.5.4.16"/>
    </reaction>
</comment>
<comment type="pathway">
    <text evidence="2">Cofactor biosynthesis; 7,8-dihydroneopterin triphosphate biosynthesis; 7,8-dihydroneopterin triphosphate from GTP: step 1/1.</text>
</comment>
<comment type="subunit">
    <text evidence="1">Toroid-shaped homodecamer, composed of two pentamers of five dimers.</text>
</comment>
<comment type="similarity">
    <text evidence="2">Belongs to the GTP cyclohydrolase I family.</text>
</comment>
<reference key="1">
    <citation type="journal article" date="2006" name="PLoS Genet.">
        <title>The complete genome sequence and comparative genome analysis of the high pathogenicity Yersinia enterocolitica strain 8081.</title>
        <authorList>
            <person name="Thomson N.R."/>
            <person name="Howard S."/>
            <person name="Wren B.W."/>
            <person name="Holden M.T.G."/>
            <person name="Crossman L."/>
            <person name="Challis G.L."/>
            <person name="Churcher C."/>
            <person name="Mungall K."/>
            <person name="Brooks K."/>
            <person name="Chillingworth T."/>
            <person name="Feltwell T."/>
            <person name="Abdellah Z."/>
            <person name="Hauser H."/>
            <person name="Jagels K."/>
            <person name="Maddison M."/>
            <person name="Moule S."/>
            <person name="Sanders M."/>
            <person name="Whitehead S."/>
            <person name="Quail M.A."/>
            <person name="Dougan G."/>
            <person name="Parkhill J."/>
            <person name="Prentice M.B."/>
        </authorList>
    </citation>
    <scope>NUCLEOTIDE SEQUENCE [LARGE SCALE GENOMIC DNA]</scope>
    <source>
        <strain>NCTC 13174 / 8081</strain>
    </source>
</reference>
<organism>
    <name type="scientific">Yersinia enterocolitica serotype O:8 / biotype 1B (strain NCTC 13174 / 8081)</name>
    <dbReference type="NCBI Taxonomy" id="393305"/>
    <lineage>
        <taxon>Bacteria</taxon>
        <taxon>Pseudomonadati</taxon>
        <taxon>Pseudomonadota</taxon>
        <taxon>Gammaproteobacteria</taxon>
        <taxon>Enterobacterales</taxon>
        <taxon>Yersiniaceae</taxon>
        <taxon>Yersinia</taxon>
    </lineage>
</organism>
<protein>
    <recommendedName>
        <fullName evidence="2">GTP cyclohydrolase 1</fullName>
        <ecNumber evidence="2">3.5.4.16</ecNumber>
    </recommendedName>
    <alternativeName>
        <fullName evidence="2">GTP cyclohydrolase I</fullName>
        <shortName evidence="2">GTP-CH-I</shortName>
    </alternativeName>
</protein>
<keyword id="KW-0342">GTP-binding</keyword>
<keyword id="KW-0378">Hydrolase</keyword>
<keyword id="KW-0479">Metal-binding</keyword>
<keyword id="KW-0547">Nucleotide-binding</keyword>
<keyword id="KW-0554">One-carbon metabolism</keyword>
<keyword id="KW-0862">Zinc</keyword>